<accession>P04602</accession>
<protein>
    <recommendedName>
        <fullName evidence="1">Protein Nef</fullName>
    </recommendedName>
    <alternativeName>
        <fullName evidence="1">3'ORF</fullName>
    </alternativeName>
    <alternativeName>
        <fullName evidence="1">Negative factor</fullName>
        <shortName evidence="1">F-protein</shortName>
    </alternativeName>
    <component>
        <recommendedName>
            <fullName evidence="1">C-terminal core protein</fullName>
        </recommendedName>
    </component>
</protein>
<keyword id="KW-0002">3D-structure</keyword>
<keyword id="KW-0014">AIDS</keyword>
<keyword id="KW-0053">Apoptosis</keyword>
<keyword id="KW-0244">Early protein</keyword>
<keyword id="KW-1032">Host cell membrane</keyword>
<keyword id="KW-1040">Host Golgi apparatus</keyword>
<keyword id="KW-1043">Host membrane</keyword>
<keyword id="KW-0945">Host-virus interaction</keyword>
<keyword id="KW-1080">Inhibition of host adaptive immune response by virus</keyword>
<keyword id="KW-1083">Inhibition of host autophagy by virus</keyword>
<keyword id="KW-1115">Inhibition of host MHC class I molecule presentation by virus</keyword>
<keyword id="KW-1116">Inhibition of host MHC class II molecule presentation by virus</keyword>
<keyword id="KW-0449">Lipoprotein</keyword>
<keyword id="KW-0472">Membrane</keyword>
<keyword id="KW-0519">Myristate</keyword>
<keyword id="KW-0597">Phosphoprotein</keyword>
<keyword id="KW-0964">Secreted</keyword>
<keyword id="KW-0729">SH3-binding</keyword>
<keyword id="KW-0899">Viral immunoevasion</keyword>
<keyword id="KW-0946">Virion</keyword>
<keyword id="KW-0843">Virulence</keyword>
<organismHost>
    <name type="scientific">Homo sapiens</name>
    <name type="common">Human</name>
    <dbReference type="NCBI Taxonomy" id="9606"/>
</organismHost>
<evidence type="ECO:0000255" key="1">
    <source>
        <dbReference type="HAMAP-Rule" id="MF_04078"/>
    </source>
</evidence>
<proteinExistence type="evidence at protein level"/>
<name>NEF_HV1Z6</name>
<organism>
    <name type="scientific">Human immunodeficiency virus type 1 group M subtype D (isolate Z6)</name>
    <name type="common">HIV-1</name>
    <dbReference type="NCBI Taxonomy" id="11708"/>
    <lineage>
        <taxon>Viruses</taxon>
        <taxon>Riboviria</taxon>
        <taxon>Pararnavirae</taxon>
        <taxon>Artverviricota</taxon>
        <taxon>Revtraviricetes</taxon>
        <taxon>Ortervirales</taxon>
        <taxon>Retroviridae</taxon>
        <taxon>Orthoretrovirinae</taxon>
        <taxon>Lentivirus</taxon>
        <taxon>Human immunodeficiency virus type 1</taxon>
    </lineage>
</organism>
<sequence>MGGRWSKSSIVGWPAIRERIRRTDPRRTDPAADGVGAASRDLEKHGAITSSNTRDTNADCAWLEAQEESEEVGFPVRPQVPLRPMTYKLAVDLSHFLKEKGGLEGLIWSKKRQEILDLWVYNTQGIFPDWQNYTPGPGIRYPLTFGWCFELVPVDPREVEEATEGETNCLLHPVCQHGMEDTEREVLKWRFNSRLAFEHKAREMHPEFYKDC</sequence>
<dbReference type="EMBL" id="K03458">
    <property type="protein sequence ID" value="AAA45381.1"/>
    <property type="molecule type" value="Genomic_RNA"/>
</dbReference>
<dbReference type="PIR" id="F26192">
    <property type="entry name" value="QQLJZR"/>
</dbReference>
<dbReference type="PDB" id="1QVO">
    <property type="method" value="X-ray"/>
    <property type="resolution" value="2.22 A"/>
    <property type="chains" value="C/F=79-88"/>
</dbReference>
<dbReference type="PDBsum" id="1QVO"/>
<dbReference type="SMR" id="P04602"/>
<dbReference type="EvolutionaryTrace" id="P04602"/>
<dbReference type="GO" id="GO:0005576">
    <property type="term" value="C:extracellular region"/>
    <property type="evidence" value="ECO:0007669"/>
    <property type="project" value="UniProtKB-SubCell"/>
</dbReference>
<dbReference type="GO" id="GO:0044178">
    <property type="term" value="C:host cell Golgi membrane"/>
    <property type="evidence" value="ECO:0007669"/>
    <property type="project" value="UniProtKB-SubCell"/>
</dbReference>
<dbReference type="GO" id="GO:0020002">
    <property type="term" value="C:host cell plasma membrane"/>
    <property type="evidence" value="ECO:0007669"/>
    <property type="project" value="UniProtKB-SubCell"/>
</dbReference>
<dbReference type="GO" id="GO:0016020">
    <property type="term" value="C:membrane"/>
    <property type="evidence" value="ECO:0007669"/>
    <property type="project" value="UniProtKB-UniRule"/>
</dbReference>
<dbReference type="GO" id="GO:0044423">
    <property type="term" value="C:virion component"/>
    <property type="evidence" value="ECO:0007669"/>
    <property type="project" value="UniProtKB-UniRule"/>
</dbReference>
<dbReference type="GO" id="GO:0005525">
    <property type="term" value="F:GTP binding"/>
    <property type="evidence" value="ECO:0007669"/>
    <property type="project" value="UniProtKB-UniRule"/>
</dbReference>
<dbReference type="GO" id="GO:0017124">
    <property type="term" value="F:SH3 domain binding"/>
    <property type="evidence" value="ECO:0007669"/>
    <property type="project" value="UniProtKB-UniRule"/>
</dbReference>
<dbReference type="GO" id="GO:0046776">
    <property type="term" value="P:symbiont-mediated suppression of host antigen processing and presentation of peptide antigen via MHC class I"/>
    <property type="evidence" value="ECO:0007669"/>
    <property type="project" value="UniProtKB-UniRule"/>
</dbReference>
<dbReference type="GO" id="GO:0039505">
    <property type="term" value="P:symbiont-mediated suppression of host antigen processing and presentation of peptide antigen via MHC class II"/>
    <property type="evidence" value="ECO:0007669"/>
    <property type="project" value="UniProtKB-UniRule"/>
</dbReference>
<dbReference type="GO" id="GO:0140321">
    <property type="term" value="P:symbiont-mediated suppression of host autophagy"/>
    <property type="evidence" value="ECO:0007669"/>
    <property type="project" value="UniProtKB-KW"/>
</dbReference>
<dbReference type="Gene3D" id="4.10.890.10">
    <property type="entry name" value="HIV 1 nef anchor domain"/>
    <property type="match status" value="1"/>
</dbReference>
<dbReference type="Gene3D" id="3.30.62.10">
    <property type="entry name" value="Nef Regulatory Factor"/>
    <property type="match status" value="1"/>
</dbReference>
<dbReference type="HAMAP" id="MF_04078">
    <property type="entry name" value="NEF_HIV"/>
    <property type="match status" value="1"/>
</dbReference>
<dbReference type="InterPro" id="IPR027480">
    <property type="entry name" value="HIV-1_Nef_anchor_sf"/>
</dbReference>
<dbReference type="InterPro" id="IPR027481">
    <property type="entry name" value="HIV-1_Nef_core_sf"/>
</dbReference>
<dbReference type="InterPro" id="IPR001558">
    <property type="entry name" value="HIV_Nef"/>
</dbReference>
<dbReference type="Pfam" id="PF00469">
    <property type="entry name" value="F-protein"/>
    <property type="match status" value="1"/>
</dbReference>
<dbReference type="SUPFAM" id="SSF55671">
    <property type="entry name" value="Regulatory factor Nef"/>
    <property type="match status" value="1"/>
</dbReference>
<comment type="function">
    <text evidence="1">Factor of infectivity and pathogenicity, required for optimal virus replication. Alters numerous pathways of T-lymphocyte function and down-regulates immunity surface molecules in order to evade host defense and increase viral infectivity. Alters the functionality of other immunity cells, like dendritic cells, monocytes/macrophages and NK cells.</text>
</comment>
<comment type="function">
    <text evidence="1">In infected CD4(+) T-lymphocytes, down-regulates the surface MHC-I, mature MHC-II, CD4, CD28, CCR5 and CXCR4 molecules. Mediates internalization and degradation of host CD4 through the interaction of with the cytoplasmic tail of CD4, the recruitment of AP-2 (clathrin adapter protein complex 2), internalization through clathrin coated pits, and subsequent transport to endosomes and lysosomes for degradation. Diverts host MHC-I molecules to the trans-Golgi network-associated endosomal compartments by an endocytic pathway to finally target them for degradation. MHC-I down-regulation may involve AP-1 (clathrin adapter protein complex 1) or possibly Src family kinase-ZAP70/Syk-PI3K cascade recruited by PACS2. In consequence infected cells are masked for immune recognition by cytotoxic T-lymphocytes. Decreasing the number of immune receptors also prevents reinfection by more HIV particles (superinfection). Down-regulates host SERINC3 and SERINC5 thereby excluding these proteins from the viral particles. Virion infectivity is drastically higher when SERINC3 or SERINC5 are excluded from the viral envelope, because these host antiviral proteins impair the membrane fusion event necessary for subsequent virion penetration.</text>
</comment>
<comment type="function">
    <text evidence="1">Bypasses host T-cell signaling by inducing a transcriptional program nearly identical to that of anti-CD3 cell activation. Interaction with TCR-zeta chain up-regulates the Fas ligand (FasL). Increasing surface FasL molecules and decreasing surface MHC-I molecules on infected CD4(+) cells send attacking cytotoxic CD8+ T-lymphocytes into apoptosis.</text>
</comment>
<comment type="function">
    <text evidence="1">Plays a role in optimizing the host cell environment for viral replication without causing cell death by apoptosis. Protects the infected cells from apoptosis in order to keep them alive until the next virus generation is ready to strike. Inhibits the Fas and TNFR-mediated death signals by blocking MAP3K5/ASK1. Decreases the half-life of TP53, protecting the infected cell against p53-mediated apoptosis. Inhibits the apoptotic signals regulated by the Bcl-2 family proteins through the formation of a Nef/PI3-kinase/PAK2 complex that leads to activation of PAK2 and induces phosphorylation of host BAD.</text>
</comment>
<comment type="function">
    <text evidence="1">Extracellular Nef protein targets CD4(+) T-lymphocytes for apoptosis by interacting with CXCR4 surface receptors.</text>
</comment>
<comment type="subunit">
    <text evidence="1">Monomer; cytosolic form. Homodimer; membrane bound form. Interacts with Nef associated p21-activated kinase (PAK2); this interaction activates PAK2. Associates with the Nef-MHC-I-AP1 complex; this complex is required for MHC-I internalization. Interacts (via C-terminus) with host PI3-kinase. Interacts with host PACS1; this interaction seems to be weak. Interacts with host PACS2. Interacts with host LCK and MAPK3; these interactions inhibit the kinase activity of the latter. Interacts with host ATP6V1H; this interaction may play a role in CD4 endocytosis. Associates with the CD4-Nef-AP2 complex; this complex is required for CD4 internalization. Interacts with host AP2 subunit alpha and AP2 subunit sigma2. Interacts with TCR-zeta chain; this interaction up-regulates the Fas ligand (FasL) surface expression. Interacts with host HCK, LYN, and SRC; these interactions activate the Src family kinases. Interacts with MAP3K5; this interaction inhibits the Fas and TNFR-mediated death signals. Interacts with beta-COP and PTE1. Interacts with human RACK1; this increases Nef phosphorylation by PKC. Interacts with TP53; this interaction decreases the half-life of TP53, protecting the infected cell against p53-mediated apoptosis.</text>
</comment>
<comment type="subcellular location">
    <subcellularLocation>
        <location evidence="1">Host cell membrane</location>
        <topology evidence="1">Lipid-anchor</topology>
        <orientation evidence="1">Cytoplasmic side</orientation>
    </subcellularLocation>
    <subcellularLocation>
        <location evidence="1">Virion</location>
    </subcellularLocation>
    <subcellularLocation>
        <location evidence="1">Secreted</location>
    </subcellularLocation>
    <subcellularLocation>
        <location evidence="1">Host Golgi apparatus membrane</location>
    </subcellularLocation>
    <text evidence="1">TGN localization requires PACS1. Associates with the inner plasma membrane through its N-terminal domain. Nef stimulates its own export via the release of exosomes. Incorporated in virions at a rate of about 10 molecules per virion, where it is cleaved.</text>
</comment>
<comment type="induction">
    <text evidence="1">Expressed early in the viral replication cycle.</text>
</comment>
<comment type="domain">
    <text evidence="1">The N-terminal domain is composed of the N-myristoyl glycine and of a cluster of positively charged amino acids. It is required for inner plasma membrane targeting of Nef and virion incorporation, and thereby for infectivity. This domain is also involved in binding to TP53.</text>
</comment>
<comment type="domain">
    <text evidence="1">The SH3-binding domain constituted of PxxP motifs mediates binding to several Src family proteins thereby regulating their tyrosine kinase activity. The same motifs also mediates the association with MAPK3, PI3-kinase and TCR-zeta.</text>
</comment>
<comment type="domain">
    <text evidence="1">The dileucine internalization motif and a diacidic motif seem to be required for binding to AP-2.</text>
</comment>
<comment type="domain">
    <text evidence="1">The acidic region binds to the sorting protein PACS-2, which targets Nef to the paranuclear region, enabling the PxxP motif to direct assembly of an SFK/ZAP-70/PI3K complex that accelerates endocytosis of cell-surface MHC-I.</text>
</comment>
<comment type="PTM">
    <text evidence="1">The virion-associated Nef proteins are cleaved by the viral protease to release the soluble C-terminal core protein. Nef is probably cleaved concomitantly with viral structural proteins on maturation of virus particles.</text>
</comment>
<comment type="PTM">
    <text evidence="1">Myristoylated.</text>
</comment>
<comment type="PTM">
    <text evidence="1">Phosphorylated on serine residues, probably by host PKCdelta and theta.</text>
</comment>
<comment type="miscellaneous">
    <text evidence="1">HIV-1 lineages are divided in three main groups, M (for Major), O (for Outlier), and N (for New, or Non-M, Non-O). The vast majority of strains found worldwide belong to the group M. Group O seems to be endemic to and largely confined to Cameroon and neighboring countries in West Central Africa, where these viruses represent a small minority of HIV-1 strains. The group N is represented by a limited number of isolates from Cameroonian persons. The group M is further subdivided in 9 clades or subtypes (A to D, F to H, J and K).</text>
</comment>
<comment type="similarity">
    <text evidence="1">Belongs to the lentivirus primate group Nef protein family.</text>
</comment>
<gene>
    <name evidence="1" type="primary">nef</name>
</gene>
<reference key="1">
    <citation type="journal article" date="1987" name="Gene">
        <title>Molecular characterization of human immunodeficiency virus from Zaire: nucleotide sequence analysis identifies conserved and variable domains in the envelope gene.</title>
        <authorList>
            <person name="Srinivasan A."/>
            <person name="Anand R."/>
            <person name="York D."/>
            <person name="Ranganathan P."/>
            <person name="Feorino P."/>
            <person name="Schochetman G."/>
            <person name="Curran J."/>
            <person name="Kalyanaraman V.S."/>
            <person name="Luciw P.A."/>
            <person name="Sanchez-Pescador R."/>
        </authorList>
    </citation>
    <scope>NUCLEOTIDE SEQUENCE [GENOMIC RNA]</scope>
</reference>
<feature type="initiator methionine" description="Removed; by host" evidence="1">
    <location>
        <position position="1"/>
    </location>
</feature>
<feature type="chain" id="PRO_0000038369" description="Protein Nef" evidence="1">
    <location>
        <begin position="2"/>
        <end position="212"/>
    </location>
</feature>
<feature type="chain" id="PRO_0000038370" description="C-terminal core protein" evidence="1">
    <location>
        <begin position="63"/>
        <end position="212"/>
    </location>
</feature>
<feature type="region of interest" description="Acidic; interacts with host PACS1 and PACS2; stabilizes the interaction of NEF/MHC-I with host AP1M1; necessary for MHC-I internalization" evidence="1">
    <location>
        <begin position="67"/>
        <end position="71"/>
    </location>
</feature>
<feature type="region of interest" description="SH3-binding; interaction with Src family tyrosine kinases" evidence="1">
    <location>
        <begin position="75"/>
        <end position="84"/>
    </location>
</feature>
<feature type="region of interest" description="Mediates dimerization, Nef-PTE1 interaction" evidence="1">
    <location>
        <begin position="114"/>
        <end position="130"/>
    </location>
</feature>
<feature type="region of interest" description="Binding to ATP6V1H" evidence="1">
    <location>
        <begin position="154"/>
        <end position="186"/>
    </location>
</feature>
<feature type="short sequence motif" description="PxxP; stabilizes the interaction of NEF/MHC-I with host AP1M1; necessary for MHC-I internalization" evidence="1">
    <location>
        <begin position="78"/>
        <end position="81"/>
    </location>
</feature>
<feature type="short sequence motif" description="Dileucine internalization motif; necessary for CD4 internalization" evidence="1">
    <location>
        <begin position="170"/>
        <end position="171"/>
    </location>
</feature>
<feature type="short sequence motif" description="Diacidic; necessary for CD4 internalization" evidence="1">
    <location>
        <begin position="180"/>
        <end position="181"/>
    </location>
</feature>
<feature type="site" description="Cleavage; by viral protease" evidence="1">
    <location>
        <begin position="62"/>
        <end position="63"/>
    </location>
</feature>
<feature type="modified residue" description="Phosphoserine; by host" evidence="1">
    <location>
        <position position="6"/>
    </location>
</feature>
<feature type="lipid moiety-binding region" description="N-myristoyl glycine; by host" evidence="1">
    <location>
        <position position="2"/>
    </location>
</feature>